<proteinExistence type="evidence at protein level"/>
<feature type="chain" id="PRO_0000282534" description="Insulin-like growth factor 2 mRNA-binding protein 1">
    <location>
        <begin position="1"/>
        <end position="577"/>
    </location>
</feature>
<feature type="domain" description="RRM 1" evidence="4">
    <location>
        <begin position="2"/>
        <end position="75"/>
    </location>
</feature>
<feature type="domain" description="RRM 2" evidence="4">
    <location>
        <begin position="81"/>
        <end position="156"/>
    </location>
</feature>
<feature type="domain" description="KH 1" evidence="3">
    <location>
        <begin position="195"/>
        <end position="260"/>
    </location>
</feature>
<feature type="domain" description="KH 2" evidence="3">
    <location>
        <begin position="276"/>
        <end position="343"/>
    </location>
</feature>
<feature type="domain" description="KH 3" evidence="3">
    <location>
        <begin position="405"/>
        <end position="470"/>
    </location>
</feature>
<feature type="domain" description="KH 4" evidence="3">
    <location>
        <begin position="487"/>
        <end position="553"/>
    </location>
</feature>
<feature type="region of interest" description="Disordered" evidence="5">
    <location>
        <begin position="156"/>
        <end position="190"/>
    </location>
</feature>
<feature type="region of interest" description="Sufficient for nuclear export" evidence="1">
    <location>
        <begin position="312"/>
        <end position="323"/>
    </location>
</feature>
<feature type="region of interest" description="Sufficient for nuclear export" evidence="1">
    <location>
        <begin position="485"/>
        <end position="495"/>
    </location>
</feature>
<feature type="modified residue" description="Phosphoserine" evidence="2">
    <location>
        <position position="12"/>
    </location>
</feature>
<feature type="modified residue" description="Phosphoserine" evidence="2">
    <location>
        <position position="73"/>
    </location>
</feature>
<feature type="modified residue" description="Phosphoserine; by MTOR" evidence="15 19 20">
    <location>
        <position position="181"/>
    </location>
</feature>
<feature type="modified residue" description="Phosphothreonine" evidence="2">
    <location>
        <position position="528"/>
    </location>
</feature>
<feature type="mutagenesis site" description="Abolished phosphorylation by mTORC2." evidence="15">
    <original>S</original>
    <variation>A</variation>
    <location>
        <position position="181"/>
    </location>
</feature>
<feature type="sequence conflict" description="In Ref. 8; AAH51679." evidence="18" ref="8">
    <original>E</original>
    <variation>G</variation>
    <location>
        <position position="276"/>
    </location>
</feature>
<feature type="sequence conflict" description="In Ref. 6; BAC32119." evidence="18" ref="6">
    <original>E</original>
    <variation>G</variation>
    <location>
        <position position="406"/>
    </location>
</feature>
<feature type="strand" evidence="21">
    <location>
        <begin position="406"/>
        <end position="412"/>
    </location>
</feature>
<feature type="helix" evidence="21">
    <location>
        <begin position="414"/>
        <end position="416"/>
    </location>
</feature>
<feature type="helix" evidence="21">
    <location>
        <begin position="417"/>
        <end position="421"/>
    </location>
</feature>
<feature type="helix" evidence="21">
    <location>
        <begin position="423"/>
        <end position="425"/>
    </location>
</feature>
<feature type="helix" evidence="21">
    <location>
        <begin position="426"/>
        <end position="435"/>
    </location>
</feature>
<feature type="strand" evidence="21">
    <location>
        <begin position="437"/>
        <end position="441"/>
    </location>
</feature>
<feature type="strand" evidence="21">
    <location>
        <begin position="452"/>
        <end position="458"/>
    </location>
</feature>
<feature type="helix" evidence="21">
    <location>
        <begin position="460"/>
        <end position="476"/>
    </location>
</feature>
<feature type="strand" evidence="21">
    <location>
        <begin position="488"/>
        <end position="495"/>
    </location>
</feature>
<feature type="helix" evidence="21">
    <location>
        <begin position="496"/>
        <end position="503"/>
    </location>
</feature>
<feature type="helix" evidence="21">
    <location>
        <begin position="505"/>
        <end position="507"/>
    </location>
</feature>
<feature type="helix" evidence="21">
    <location>
        <begin position="508"/>
        <end position="517"/>
    </location>
</feature>
<feature type="strand" evidence="21">
    <location>
        <begin position="520"/>
        <end position="522"/>
    </location>
</feature>
<feature type="strand" evidence="21">
    <location>
        <begin position="533"/>
        <end position="541"/>
    </location>
</feature>
<feature type="helix" evidence="21">
    <location>
        <begin position="543"/>
        <end position="562"/>
    </location>
</feature>
<sequence length="577" mass="63451">MNKLYIGNLNESVTPADLEKVFAEHKISYSGQFLVKSGYAFVDCPDEHWAMKAIETFSGKVELQGKRLEIEHSVPKKQRSRKIQIRNIPPQLRWEVLDSLLAQYGTVENCEQVNTESETAVVNVTYSNREQTRQAIMKLNGHQLENHALKVSYIPDEQITQGPENGRRGGFGSRGQPRQGSPVAAGAPAKQQPVDIPLRLLVPTQYVGAIIGKEGATIRNITKQTQSKIDVHRKENAGAAEKAISVHSTPEGCSSACKMILEIMHKEAKDTKTADEVPLKILAHNNFVGRLIGKEGRNLKKVEQDTETKITISSLQDLTLYNPERTITVKGAIENCCRAEQEIMKKVREAYENDVAAMSLQSHLIPGLNLAAVGLFPASSSAVPPPPSSVTGAAPYSSFMQAPEQEMVQVFIPAQAVGAIIGKKGQHIKQLSRFASASIKIAPPETPDSKVRMVVITGPPEAQFKAQGRIYGKLKEENFFGPKEEVKLETHIRVPASAAGRVIGKGGKTVNELQNLTAAEVVVPRDQTPDENDQVIVKIIGHFYASQMAQRKIRDILAQVKQQHQKGQSNLAQARRK</sequence>
<comment type="function">
    <text evidence="2 10 12 13 14 15">RNA-binding factor that recruits target transcripts to cytoplasmic protein-RNA complexes (mRNPs). This transcript 'caging' into mRNPs allows mRNA transport and transient storage (PubMed:15355996, PubMed:17264115, PubMed:21964071, PubMed:22465430, PubMed:23388827). It also modulates the rate and location at which target transcripts encounter the translational apparatus and shields them from endonuclease attacks or microRNA-mediated degradation. Preferentially binds to N6-methyladenosine (m6A)-containing mRNAs and increases their stability (By similarity). Regulates localized beta-actin/ACTB mRNA translation, a crucial process for cell polarity, cell migration and neurite outgrowth. Co-transcriptionally associates with the ACTB mRNA in the nucleus. This binding involves a conserved 54-nucleotide element in the ACTB mRNA 3'-UTR, known as the 'zipcode'. The RNP thus formed is exported to the cytoplasm, binds to a motor protein and is transported along the cytoskeleton to the cell periphery. During transport, prevents ACTB mRNA from being translated into protein. When the RNP complex reaches its destination near the plasma membrane, IGF2BP1 is phosphorylated. This releases the mRNA, allowing ribosomal 40S and 60S subunits to assemble and initiate ACTB protein synthesis. Monomeric ACTB then assembles into the subcortical actin cytoskeleton (By similarity). During neuronal development, key regulator of neurite outgrowth, growth cone guidance and neuronal cell migration, presumably through the spatiotemporal fine tuning of protein synthesis, such as that of ACTB (By similarity). May regulate mRNA transport to activated synapses (By similarity). Binds to the 3'-UTR of CD44 mRNA and stabilizes it, hence promotes cell adhesion and invadopodia formation in cancer cells (By similarity). Binds to the oncofetal H19 transcript and regulates its localization (By similarity). Binds to and stabilizes BTRC/FBW1A mRNA (By similarity). Binds to the adenine-rich autoregulatory sequence (ARS) located in PABPC1 mRNA and represses its translation. PABPC1 mRNA-binding is stimulated by PABPC1 protein. Prevents BTRC/FBW1A mRNA degradation by disrupting microRNA-dependent interaction with AGO2 (By similarity). During cellular stress, such as oxidative stress or heat shock, stabilizes target mRNAs that are recruited to stress granules, including CD44, IGF2, MAPK4, MYC, PTEN, RAPGEF2 and RPS6KA5 transcripts (By similarity). Interacts with GAP43 transcript and transports it to axons. Binds to the 3'-UTR of IGF2 mRNA by a mechanism of cooperative and sequential dimerization and regulates IGF2 mRNA subcellular localization and translation (PubMed:23388827). Binds to MYC mRNA, in the coding region instability determinant (CRD) of the open reading frame (ORF), hence prevents MYC cleavage by endonucleases and possibly microRNA targeting to MYC-CRD. Binding to MYC mRNA is enhanced by m6A-modification of the CRD (By similarity). Binds to and stabilizes ABCB1/MDR-1 mRNA. Binds to the neuron-specific TAU mRNA and regulates its localization. Plays a direct role in the transport and translation of transcripts required for axonal regeneration in adult sensory neurons. During interstinal wound repair, interacts with and stabilizes PTGS2 transcript. PTGS2 mRNA stabilization may be crucial for colonic mucosal wound healing.</text>
</comment>
<comment type="subunit">
    <text evidence="2 8">Can form homodimers and heterodimers with IGF2BP1 and IGF2BP3 (By similarity). Component of the coding region determinant (CRD)-mediated complex, composed of DHX9, HNRNPU, IGF2BP1, SYNCRIP and YBX1 (By similarity). Identified in a mRNP complex, at least composed of DHX9, DDX3X, ELAVL1, HNRNPU, IGF2BP1, ILF3, PABPC1, PCBP2, PTBP2, STAU1, STAU2, SYNCRIP and YBX1 (By similarity). Associates with mRNP complex (By similarity). Interacts with FMR1 (By similarity). Component of a multisubunit autoregulatory RNP complex (ARC), at least composed of IGF2BP1, PABPC1 and CSDE1. Interacts with AGO1 and AGO2 (By similarity). Interacts, through domains KH3 and KH4, with PABPC1 in an RNA-independent manner (By similarity). Component of a TAU mRNP complex, at least composed of IGF2BP1, ELAVL4 and G3BP. Interacts with ELAVL4 in an RNA-dependent manner. Associates with microtubules and polysomes. Interacts with ELAVL1 and MATR3 (By similarity).</text>
</comment>
<comment type="subcellular location">
    <subcellularLocation>
        <location evidence="7">Nucleus</location>
    </subcellularLocation>
    <subcellularLocation>
        <location evidence="7">Cytoplasm</location>
    </subcellularLocation>
    <subcellularLocation>
        <location evidence="1">Cytoplasm</location>
        <location evidence="1">Perinuclear region</location>
    </subcellularLocation>
    <subcellularLocation>
        <location evidence="2">Cytoplasm</location>
        <location evidence="2">P-body</location>
    </subcellularLocation>
    <subcellularLocation>
        <location evidence="2">Cytoplasm</location>
        <location evidence="2">Stress granule</location>
    </subcellularLocation>
    <subcellularLocation>
        <location evidence="1">Cell projection</location>
        <location evidence="1">Lamellipodium</location>
    </subcellularLocation>
    <subcellularLocation>
        <location evidence="1">Cell projection</location>
        <location evidence="1">Dendrite</location>
    </subcellularLocation>
    <subcellularLocation>
        <location evidence="1">Cell projection</location>
        <location evidence="1">Dendritic spine</location>
    </subcellularLocation>
    <subcellularLocation>
        <location evidence="1">Cell projection</location>
        <location evidence="1">Growth cone</location>
    </subcellularLocation>
    <subcellularLocation>
        <location evidence="1">Cell projection</location>
        <location evidence="1">Filopodium</location>
    </subcellularLocation>
    <subcellularLocation>
        <location evidence="1">Cell projection</location>
        <location evidence="1">Axon</location>
    </subcellularLocation>
    <text evidence="1">In the nucleus, located in discrete foci, coinciding with the sites of ACTB transcription (By similarity). In the cytoplasm, localizes in cytoplasmic mRNP granules. Colocalizes with microtubules in growth cone filopodia and along neurites in neuronal cells (By similarity). Cytoplasmic colocalization with ACTB mRNA is partially lost at the cell periphery, suggesting release of the transcript (By similarity). In hippocampal neurons, predominantly located within dendrites, particularly at dendritic branching points in young cells, compared to axons (By similarity). In axons, predominantly found in axonal branches and their growth cones (By similarity). In neuronal processes, exhibits fast retrograde and anterograde movements, when associated with ACTB mRNA; this motility is lost when the association is inhibited (By similarity). Dendritic levels are regulated by neuronal activity and glutaminergic signals: they are increased by KCl-induced depolarization, which induces rapid efflux from the cell body into dendrites, and decreased by NMDA receptor agonists (By similarity). In motile cells, such as migrating fibroblasts, localizes to leading edges where it colocalizes with microtubules and microfilaments and to retracting tails (By similarity). In motile cells, transported towards the leading edge into the cortical region of the lamellipodia where it is connected to microfilaments (By similarity). In response to cellular stress, such as oxidative stress or heat shock, recruited to stress granules, but not to processing bodies (By similarity).</text>
</comment>
<comment type="tissue specificity">
    <text evidence="11 13 14 16">Expressed in zygotes and blastocysts (at protein level). Expressed in brain, skeletal muscle, trophoblasts of placenta, oocytes and spermatogonia (at protein level). Expressed in testis and ovary. Following colon injury, expressed in the wound bed mesenchyme during the first phase of repair, probably by colonic mesenchymal stem cells (at protein level).</text>
</comment>
<comment type="developmental stage">
    <text evidence="6 9 11 13 14 16">Expressed during embryonic development and expression declines towards birth (at protein level). At 10.5 dpc, mainly expressed in the fore- and hindbrain, the snout, the branchial arches, the developing limb buds, and the tail. At 12.5 dpc, expression increased in the expanding fore- and hindbrain, as well as in the neural tract. Marked expression also observed in the snout, the interdigital mesenchyme of the limb buds, the tail, the branchial arches and somites, and the developing eye, tongue, heart and liver. Expressed in myoblasts and myotubes at 12.5 dpc (at protein level). From 12.5 to 15.5 dpc, expressed at the basal plasma cell membrane in the basal layer of the epidermis of the skin, lung and intestine (at protein level). Expressed in gonads at 12.5 and 14.5 dpc (at protein level). At 14.5 dpc in limb buds, becomes restricted to the future tendons. Expressed in germ cells at 16.5 dpc (at protein level). At 17.5 dpc, expression generally decreases, but remains high in the intestine, in the developing tubules of the kidney, and in the liver. Expressed until P12, although very low levels may remain in some tissues, such as intestines, kidney and brain, throughout adulthood. Following colonic injury, up-regulated in the wound mucosa at days 2 and 4 post-injury and down-regulated at day 6 post-injury, as compared with uninjured mucosa.</text>
</comment>
<comment type="domain">
    <text evidence="2">Domains KH3 and KH4 are the major RNA-binding modules, although KH1 and KH2 may also contribute. KH1 and KH2, and possibly KH3 and KH4, promote the formation of higher ordered protein-RNA complexes, which may be essential for IGF2BP1 cytoplasmic retention. KH domains are required for RNA-dependent homo- and heterooligomerization and for localization to stress granules. KH3 and KH4 mediate association with the cytoskeleton. Two nuclear export signals (NES) have been identified in KH2 and KH4 domains, respectively. Only KH2 NES is XPO1-dependent. Both NES may be redundant, since individual in vitro mutations do not affect subcellular location of the full-length protein.</text>
</comment>
<comment type="PTM">
    <text evidence="15">Phosphorylated at Ser-181 by mTORC2 cotranslationally, promoting binding to the 3'-UTR of IGF2 mRNA.</text>
</comment>
<comment type="disruption phenotype">
    <text evidence="9">Mutant mice exhibit high perinatal mortality and only 50% are alive 3 days after birth. Early death may be due to intestinal dysfunction. Animals are on average 40% smaller than wild-type and heterozygous sex-matched littermates. Growth retardation, probably due to hypoplasia, appears from 17.5 dpc and remains permanent into adult life. Mutant animals exhibit other stricking features, including impaired development of the intestine, with small and misshapen villi and twisted colon crypts, abnormal kidney architecture and loss of cartilage in the lower extremities. Some animals show signs of neurological damage, including aggressive behavior, restlessness and circular movements.</text>
</comment>
<comment type="similarity">
    <text evidence="18">Belongs to the RRM IMP/VICKZ family.</text>
</comment>
<reference key="1">
    <citation type="journal article" date="1992" name="Genes Dev.">
        <title>Control of c-myc mRNA half-life in vitro by a protein capable of binding to a coding region stability determinant.</title>
        <authorList>
            <person name="Bernstein P.L."/>
            <person name="Herrick D.J."/>
            <person name="Prokipcak R.D."/>
            <person name="Ross J."/>
        </authorList>
    </citation>
    <scope>NUCLEOTIDE SEQUENCE [MRNA]</scope>
    <scope>RNA-BINDING</scope>
</reference>
<reference key="2">
    <citation type="journal article" date="1994" name="J. Biol. Chem.">
        <title>Purification and properties of a protein that binds to the C-terminal coding region of human c-myc mRNA.</title>
        <authorList>
            <person name="Prokipcak R.D."/>
            <person name="Herrick D.J."/>
            <person name="Ross J."/>
        </authorList>
    </citation>
    <scope>NUCLEOTIDE SEQUENCE [MRNA]</scope>
    <scope>RNA-BINDING</scope>
</reference>
<reference key="3">
    <citation type="journal article" date="1994" name="Mol. Cell. Biol.">
        <title>The half-life of c-myc mRNA in growing and serum-stimulated cells: influence of the coding and 3' untranslated regions and role of ribosome translocation.</title>
        <authorList>
            <person name="Herrick D.J."/>
            <person name="Ross J."/>
        </authorList>
    </citation>
    <scope>NUCLEOTIDE SEQUENCE [MRNA]</scope>
</reference>
<reference key="4">
    <citation type="journal article" date="1997" name="Oncogene">
        <title>Developmental regulation of CRD-BP, an RNA-binding protein that stabilizes c-myc mRNA in vitro.</title>
        <authorList>
            <person name="Leeds P."/>
            <person name="Kren B.T."/>
            <person name="Boylan J.M."/>
            <person name="Betz N.A."/>
            <person name="Steer C.J."/>
            <person name="Gruppuso P.A."/>
            <person name="Ross J."/>
        </authorList>
    </citation>
    <scope>NUCLEOTIDE SEQUENCE [MRNA]</scope>
</reference>
<reference key="5">
    <citation type="journal article" date="1998" name="Nucleic Acids Res.">
        <title>The c-myc coding region determinant-binding protein: a member of a family of KH domain RNA-binding proteins.</title>
        <authorList>
            <person name="Doyle G.A."/>
            <person name="Betz N.A."/>
            <person name="Leeds P.F."/>
            <person name="Fleisig A.J."/>
            <person name="Prokipcak R.D."/>
            <person name="Ross J."/>
        </authorList>
    </citation>
    <scope>NUCLEOTIDE SEQUENCE [MRNA]</scope>
</reference>
<reference key="6">
    <citation type="journal article" date="2005" name="Science">
        <title>The transcriptional landscape of the mammalian genome.</title>
        <authorList>
            <person name="Carninci P."/>
            <person name="Kasukawa T."/>
            <person name="Katayama S."/>
            <person name="Gough J."/>
            <person name="Frith M.C."/>
            <person name="Maeda N."/>
            <person name="Oyama R."/>
            <person name="Ravasi T."/>
            <person name="Lenhard B."/>
            <person name="Wells C."/>
            <person name="Kodzius R."/>
            <person name="Shimokawa K."/>
            <person name="Bajic V.B."/>
            <person name="Brenner S.E."/>
            <person name="Batalov S."/>
            <person name="Forrest A.R."/>
            <person name="Zavolan M."/>
            <person name="Davis M.J."/>
            <person name="Wilming L.G."/>
            <person name="Aidinis V."/>
            <person name="Allen J.E."/>
            <person name="Ambesi-Impiombato A."/>
            <person name="Apweiler R."/>
            <person name="Aturaliya R.N."/>
            <person name="Bailey T.L."/>
            <person name="Bansal M."/>
            <person name="Baxter L."/>
            <person name="Beisel K.W."/>
            <person name="Bersano T."/>
            <person name="Bono H."/>
            <person name="Chalk A.M."/>
            <person name="Chiu K.P."/>
            <person name="Choudhary V."/>
            <person name="Christoffels A."/>
            <person name="Clutterbuck D.R."/>
            <person name="Crowe M.L."/>
            <person name="Dalla E."/>
            <person name="Dalrymple B.P."/>
            <person name="de Bono B."/>
            <person name="Della Gatta G."/>
            <person name="di Bernardo D."/>
            <person name="Down T."/>
            <person name="Engstrom P."/>
            <person name="Fagiolini M."/>
            <person name="Faulkner G."/>
            <person name="Fletcher C.F."/>
            <person name="Fukushima T."/>
            <person name="Furuno M."/>
            <person name="Futaki S."/>
            <person name="Gariboldi M."/>
            <person name="Georgii-Hemming P."/>
            <person name="Gingeras T.R."/>
            <person name="Gojobori T."/>
            <person name="Green R.E."/>
            <person name="Gustincich S."/>
            <person name="Harbers M."/>
            <person name="Hayashi Y."/>
            <person name="Hensch T.K."/>
            <person name="Hirokawa N."/>
            <person name="Hill D."/>
            <person name="Huminiecki L."/>
            <person name="Iacono M."/>
            <person name="Ikeo K."/>
            <person name="Iwama A."/>
            <person name="Ishikawa T."/>
            <person name="Jakt M."/>
            <person name="Kanapin A."/>
            <person name="Katoh M."/>
            <person name="Kawasawa Y."/>
            <person name="Kelso J."/>
            <person name="Kitamura H."/>
            <person name="Kitano H."/>
            <person name="Kollias G."/>
            <person name="Krishnan S.P."/>
            <person name="Kruger A."/>
            <person name="Kummerfeld S.K."/>
            <person name="Kurochkin I.V."/>
            <person name="Lareau L.F."/>
            <person name="Lazarevic D."/>
            <person name="Lipovich L."/>
            <person name="Liu J."/>
            <person name="Liuni S."/>
            <person name="McWilliam S."/>
            <person name="Madan Babu M."/>
            <person name="Madera M."/>
            <person name="Marchionni L."/>
            <person name="Matsuda H."/>
            <person name="Matsuzawa S."/>
            <person name="Miki H."/>
            <person name="Mignone F."/>
            <person name="Miyake S."/>
            <person name="Morris K."/>
            <person name="Mottagui-Tabar S."/>
            <person name="Mulder N."/>
            <person name="Nakano N."/>
            <person name="Nakauchi H."/>
            <person name="Ng P."/>
            <person name="Nilsson R."/>
            <person name="Nishiguchi S."/>
            <person name="Nishikawa S."/>
            <person name="Nori F."/>
            <person name="Ohara O."/>
            <person name="Okazaki Y."/>
            <person name="Orlando V."/>
            <person name="Pang K.C."/>
            <person name="Pavan W.J."/>
            <person name="Pavesi G."/>
            <person name="Pesole G."/>
            <person name="Petrovsky N."/>
            <person name="Piazza S."/>
            <person name="Reed J."/>
            <person name="Reid J.F."/>
            <person name="Ring B.Z."/>
            <person name="Ringwald M."/>
            <person name="Rost B."/>
            <person name="Ruan Y."/>
            <person name="Salzberg S.L."/>
            <person name="Sandelin A."/>
            <person name="Schneider C."/>
            <person name="Schoenbach C."/>
            <person name="Sekiguchi K."/>
            <person name="Semple C.A."/>
            <person name="Seno S."/>
            <person name="Sessa L."/>
            <person name="Sheng Y."/>
            <person name="Shibata Y."/>
            <person name="Shimada H."/>
            <person name="Shimada K."/>
            <person name="Silva D."/>
            <person name="Sinclair B."/>
            <person name="Sperling S."/>
            <person name="Stupka E."/>
            <person name="Sugiura K."/>
            <person name="Sultana R."/>
            <person name="Takenaka Y."/>
            <person name="Taki K."/>
            <person name="Tammoja K."/>
            <person name="Tan S.L."/>
            <person name="Tang S."/>
            <person name="Taylor M.S."/>
            <person name="Tegner J."/>
            <person name="Teichmann S.A."/>
            <person name="Ueda H.R."/>
            <person name="van Nimwegen E."/>
            <person name="Verardo R."/>
            <person name="Wei C.L."/>
            <person name="Yagi K."/>
            <person name="Yamanishi H."/>
            <person name="Zabarovsky E."/>
            <person name="Zhu S."/>
            <person name="Zimmer A."/>
            <person name="Hide W."/>
            <person name="Bult C."/>
            <person name="Grimmond S.M."/>
            <person name="Teasdale R.D."/>
            <person name="Liu E.T."/>
            <person name="Brusic V."/>
            <person name="Quackenbush J."/>
            <person name="Wahlestedt C."/>
            <person name="Mattick J.S."/>
            <person name="Hume D.A."/>
            <person name="Kai C."/>
            <person name="Sasaki D."/>
            <person name="Tomaru Y."/>
            <person name="Fukuda S."/>
            <person name="Kanamori-Katayama M."/>
            <person name="Suzuki M."/>
            <person name="Aoki J."/>
            <person name="Arakawa T."/>
            <person name="Iida J."/>
            <person name="Imamura K."/>
            <person name="Itoh M."/>
            <person name="Kato T."/>
            <person name="Kawaji H."/>
            <person name="Kawagashira N."/>
            <person name="Kawashima T."/>
            <person name="Kojima M."/>
            <person name="Kondo S."/>
            <person name="Konno H."/>
            <person name="Nakano K."/>
            <person name="Ninomiya N."/>
            <person name="Nishio T."/>
            <person name="Okada M."/>
            <person name="Plessy C."/>
            <person name="Shibata K."/>
            <person name="Shiraki T."/>
            <person name="Suzuki S."/>
            <person name="Tagami M."/>
            <person name="Waki K."/>
            <person name="Watahiki A."/>
            <person name="Okamura-Oho Y."/>
            <person name="Suzuki H."/>
            <person name="Kawai J."/>
            <person name="Hayashizaki Y."/>
        </authorList>
    </citation>
    <scope>NUCLEOTIDE SEQUENCE [LARGE SCALE MRNA]</scope>
    <source>
        <strain>C57BL/6J</strain>
        <tissue>Embryo</tissue>
        <tissue>Head</tissue>
    </source>
</reference>
<reference key="7">
    <citation type="journal article" date="2009" name="PLoS Biol.">
        <title>Lineage-specific biology revealed by a finished genome assembly of the mouse.</title>
        <authorList>
            <person name="Church D.M."/>
            <person name="Goodstadt L."/>
            <person name="Hillier L.W."/>
            <person name="Zody M.C."/>
            <person name="Goldstein S."/>
            <person name="She X."/>
            <person name="Bult C.J."/>
            <person name="Agarwala R."/>
            <person name="Cherry J.L."/>
            <person name="DiCuccio M."/>
            <person name="Hlavina W."/>
            <person name="Kapustin Y."/>
            <person name="Meric P."/>
            <person name="Maglott D."/>
            <person name="Birtle Z."/>
            <person name="Marques A.C."/>
            <person name="Graves T."/>
            <person name="Zhou S."/>
            <person name="Teague B."/>
            <person name="Potamousis K."/>
            <person name="Churas C."/>
            <person name="Place M."/>
            <person name="Herschleb J."/>
            <person name="Runnheim R."/>
            <person name="Forrest D."/>
            <person name="Amos-Landgraf J."/>
            <person name="Schwartz D.C."/>
            <person name="Cheng Z."/>
            <person name="Lindblad-Toh K."/>
            <person name="Eichler E.E."/>
            <person name="Ponting C.P."/>
        </authorList>
    </citation>
    <scope>NUCLEOTIDE SEQUENCE [LARGE SCALE GENOMIC DNA]</scope>
    <source>
        <strain>C57BL/6J</strain>
    </source>
</reference>
<reference key="8">
    <citation type="journal article" date="2004" name="Genome Res.">
        <title>The status, quality, and expansion of the NIH full-length cDNA project: the Mammalian Gene Collection (MGC).</title>
        <authorList>
            <consortium name="The MGC Project Team"/>
        </authorList>
    </citation>
    <scope>NUCLEOTIDE SEQUENCE [LARGE SCALE MRNA]</scope>
    <source>
        <strain>129/Sv X 129SvCp</strain>
        <tissue>Embryonic stem cell</tissue>
    </source>
</reference>
<reference key="9">
    <citation type="journal article" date="2004" name="J. Neurochem.">
        <title>The insulin-like growth factor mRNA binding-protein IMP-1 and the Ras-regulatory protein G3BP associate with tau mRNA and HuD protein in differentiated P19 neuronal cells.</title>
        <authorList>
            <person name="Atlas R."/>
            <person name="Behar L."/>
            <person name="Elliott E."/>
            <person name="Ginzburg I."/>
        </authorList>
    </citation>
    <scope>PROTEIN SEQUENCE OF 1-20; 27-52; 302-325; 509-525 AND 555-561</scope>
    <scope>IDENTIFICATION BY MASS SPECTROMETRY</scope>
    <scope>IDENTIFICATION IN A MRNP COMPLEX WITH ELAVL4 AND G3BP</scope>
    <scope>INTERACTION WITH ELAVL4</scope>
    <scope>ASSOCIATION WITH POLYSOMES</scope>
</reference>
<reference key="10">
    <citation type="journal article" date="1999" name="Mol. Cell. Biol.">
        <title>A family of insulin-like growth factor II mRNA-binding proteins represses translation in late development.</title>
        <authorList>
            <person name="Nielsen J."/>
            <person name="Christiansen J."/>
            <person name="Lykke-Andersen J."/>
            <person name="Johnsen A.H."/>
            <person name="Wewer U.M."/>
            <person name="Nielsen F.C."/>
        </authorList>
    </citation>
    <scope>TISSUE SPECIFICITY</scope>
    <scope>DEVELOPMENTAL STAGE</scope>
</reference>
<reference key="11">
    <citation type="journal article" date="2000" name="J. Biol. Chem.">
        <title>H19 RNA binds four molecules of insulin-like growth factor II mRNA-binding protein.</title>
        <authorList>
            <person name="Runge S."/>
            <person name="Nielsen F.C."/>
            <person name="Nielsen J."/>
            <person name="Lykke-Andersen J."/>
            <person name="Wewer U.M."/>
            <person name="Christiansen J."/>
        </authorList>
    </citation>
    <scope>DEVELOPMENTAL STAGE</scope>
</reference>
<reference key="12">
    <citation type="journal article" date="2002" name="J. Cell Sci.">
        <title>Cytoplasmic trafficking of IGF-II mRNA-binding protein by conserved KH domains.</title>
        <authorList>
            <person name="Nielsen F.C."/>
            <person name="Nielsen J."/>
            <person name="Kristensen M.A."/>
            <person name="Koch G."/>
            <person name="Christiansen J."/>
        </authorList>
    </citation>
    <scope>ASSOCIATION WITH MICROTUBULES</scope>
    <scope>RNA-BINDING</scope>
    <scope>SUBCELLULAR LOCATION</scope>
</reference>
<reference key="13">
    <citation type="journal article" date="2003" name="Biochem. J.">
        <title>Nuclear transit of human zipcode-binding protein IMP1.</title>
        <authorList>
            <person name="Nielsen J."/>
            <person name="Adolph S.K."/>
            <person name="Rajpert-De Meyts E."/>
            <person name="Lykke-Andersen J."/>
            <person name="Koch G."/>
            <person name="Christiansen J."/>
            <person name="Nielsen F.C."/>
        </authorList>
    </citation>
    <scope>SUBCELLULAR LOCATION</scope>
</reference>
<reference key="14">
    <citation type="journal article" date="2004" name="J. Biol. Chem.">
        <title>Targeted knockdown of the RNA-binding protein CRD-BP promotes cell proliferation via an insulin-like growth factor II-dependent pathway in human K562 leukemia cells.</title>
        <authorList>
            <person name="Liao B."/>
            <person name="Patel M."/>
            <person name="Hu Y."/>
            <person name="Charles S."/>
            <person name="Herrick D.J."/>
            <person name="Brewer G."/>
        </authorList>
    </citation>
    <scope>FUNCTION</scope>
</reference>
<reference key="15">
    <citation type="journal article" date="2004" name="Mol. Cell. Biol.">
        <title>Dwarfism and impaired gut development in insulin-like growth factor II mRNA-binding protein 1-deficient mice.</title>
        <authorList>
            <person name="Hansen T.V."/>
            <person name="Hammer N.A."/>
            <person name="Nielsen J."/>
            <person name="Madsen M."/>
            <person name="Dalbaeck C."/>
            <person name="Wewer U.M."/>
            <person name="Christiansen J."/>
            <person name="Nielsen F.C."/>
        </authorList>
    </citation>
    <scope>DEVELOPMENTAL STAGE</scope>
    <scope>DISRUPTION PHENOTYPE</scope>
</reference>
<reference key="16">
    <citation type="journal article" date="2005" name="Reproduction">
        <title>Expression of IGF-II mRNA-binding proteins (IMPs) in gonads and testicular cancer.</title>
        <authorList>
            <person name="Hammer N.A."/>
            <person name="Hansen T.O."/>
            <person name="Byskov A.G."/>
            <person name="Rajpert-De Meyts E."/>
            <person name="Groendahl M.L."/>
            <person name="Bredkjaer H.E."/>
            <person name="Wewer U.M."/>
            <person name="Christiansen J."/>
            <person name="Nielsen F.C."/>
        </authorList>
    </citation>
    <scope>DEVELOPMENTAL STAGE</scope>
    <scope>TISSUE SPECIFICITY</scope>
</reference>
<reference key="17">
    <citation type="journal article" date="2007" name="Nucleic Acids Res.">
        <title>CRD-BP shields c-myc and MDR-1 RNA from endonucleolytic attack by a mammalian endoribonuclease.</title>
        <authorList>
            <person name="Sparanese D."/>
            <person name="Lee C.H."/>
        </authorList>
    </citation>
    <scope>FUNCTION</scope>
    <scope>RNA-BINDING</scope>
</reference>
<reference key="18">
    <citation type="journal article" date="2009" name="Mol. Cell. Proteomics">
        <title>Large scale localization of protein phosphorylation by use of electron capture dissociation mass spectrometry.</title>
        <authorList>
            <person name="Sweet S.M."/>
            <person name="Bailey C.M."/>
            <person name="Cunningham D.L."/>
            <person name="Heath J.K."/>
            <person name="Cooper H.J."/>
        </authorList>
    </citation>
    <scope>PHOSPHORYLATION [LARGE SCALE ANALYSIS] AT SER-181</scope>
    <scope>IDENTIFICATION BY MASS SPECTROMETRY [LARGE SCALE ANALYSIS]</scope>
    <source>
        <tissue>Embryonic fibroblast</tissue>
    </source>
</reference>
<reference key="19">
    <citation type="journal article" date="2010" name="Cell">
        <title>A tissue-specific atlas of mouse protein phosphorylation and expression.</title>
        <authorList>
            <person name="Huttlin E.L."/>
            <person name="Jedrychowski M.P."/>
            <person name="Elias J.E."/>
            <person name="Goswami T."/>
            <person name="Rad R."/>
            <person name="Beausoleil S.A."/>
            <person name="Villen J."/>
            <person name="Haas W."/>
            <person name="Sowa M.E."/>
            <person name="Gygi S.P."/>
        </authorList>
    </citation>
    <scope>PHOSPHORYLATION [LARGE SCALE ANALYSIS] AT SER-181</scope>
    <scope>IDENTIFICATION BY MASS SPECTROMETRY [LARGE SCALE ANALYSIS]</scope>
    <source>
        <tissue>Testis</tissue>
    </source>
</reference>
<reference key="20">
    <citation type="journal article" date="2011" name="EMBO J.">
        <title>Limited availability of ZBP1 restricts axonal mRNA localization and nerve regeneration capacity.</title>
        <authorList>
            <person name="Donnelly C.J."/>
            <person name="Willis D.E."/>
            <person name="Xu M."/>
            <person name="Tep C."/>
            <person name="Jiang C."/>
            <person name="Yoo S."/>
            <person name="Schanen N.C."/>
            <person name="Kirn-Safran C.B."/>
            <person name="van Minnen J."/>
            <person name="English A."/>
            <person name="Yoon S.O."/>
            <person name="Bassell G.J."/>
            <person name="Twiss J.L."/>
        </authorList>
    </citation>
    <scope>FUNCTION IN AXONAL REGENERATION</scope>
    <scope>TISSUE SPECIFICITY</scope>
    <scope>DEVELOPMENTAL STAGE</scope>
</reference>
<reference key="21">
    <citation type="journal article" date="2012" name="Gastroenterology">
        <title>Igf2bp1 is required for full induction of Ptgs2 mRNA in colonic mesenchymal stem cells in mice.</title>
        <authorList>
            <person name="Manieri N.A."/>
            <person name="Drylewicz M.R."/>
            <person name="Miyoshi H."/>
            <person name="Stappenbeck T.S."/>
        </authorList>
    </citation>
    <scope>FUNCTION IN INTESTINAL WOUND REPAIR</scope>
    <scope>RNA-BINDING</scope>
    <scope>TISSUE SPECIFICITY</scope>
    <scope>DEVELOPMENTAL STAGE</scope>
</reference>
<reference key="22">
    <citation type="journal article" date="2013" name="Cell. Mol. Life Sci.">
        <title>Insulin-like growth factor 2 mRNA-binding proteins (IGF2BPs): post-transcriptional drivers of cancer progression?</title>
        <authorList>
            <person name="Bell J.L."/>
            <person name="Wachter K."/>
            <person name="Muhleck B."/>
            <person name="Pazaitis N."/>
            <person name="Kohn M."/>
            <person name="Lederer M."/>
            <person name="Huttelmaier S."/>
        </authorList>
    </citation>
    <scope>REVIEW</scope>
</reference>
<reference key="23">
    <citation type="journal article" date="2013" name="Genes Dev.">
        <title>mTOR complex 2 phosphorylates IMP1 cotranslationally to promote IGF2 production and the proliferation of mouse embryonic fibroblasts.</title>
        <authorList>
            <person name="Dai N."/>
            <person name="Christiansen J."/>
            <person name="Nielsen F.C."/>
            <person name="Avruch J."/>
        </authorList>
    </citation>
    <scope>FUNCTION</scope>
    <scope>PHOSPHORYLATION AT SER-181</scope>
    <scope>MUTAGENESIS OF SER-181</scope>
</reference>
<name>IF2B1_MOUSE</name>
<protein>
    <recommendedName>
        <fullName>Insulin-like growth factor 2 mRNA-binding protein 1</fullName>
        <shortName evidence="17">IGF2 mRNA-binding protein 1</shortName>
        <shortName evidence="17">IMP-1</shortName>
    </recommendedName>
    <alternativeName>
        <fullName>Coding region determinant-binding protein</fullName>
        <shortName>CRD-BP</shortName>
    </alternativeName>
    <alternativeName>
        <fullName>IGF-II mRNA-binding protein 1</fullName>
    </alternativeName>
    <alternativeName>
        <fullName>VICKZ family member 1</fullName>
    </alternativeName>
    <alternativeName>
        <fullName>Zipcode-binding protein 1</fullName>
        <shortName>ZBP-1</shortName>
    </alternativeName>
</protein>
<dbReference type="EMBL" id="AF061569">
    <property type="protein sequence ID" value="AAC72743.1"/>
    <property type="molecule type" value="mRNA"/>
</dbReference>
<dbReference type="EMBL" id="AK044850">
    <property type="protein sequence ID" value="BAC32119.1"/>
    <property type="molecule type" value="mRNA"/>
</dbReference>
<dbReference type="EMBL" id="AK013940">
    <property type="protein sequence ID" value="BAB29071.1"/>
    <property type="molecule type" value="mRNA"/>
</dbReference>
<dbReference type="EMBL" id="AL603682">
    <property type="status" value="NOT_ANNOTATED_CDS"/>
    <property type="molecule type" value="Genomic_DNA"/>
</dbReference>
<dbReference type="EMBL" id="AL606704">
    <property type="status" value="NOT_ANNOTATED_CDS"/>
    <property type="molecule type" value="Genomic_DNA"/>
</dbReference>
<dbReference type="EMBL" id="BC051679">
    <property type="protein sequence ID" value="AAH51679.1"/>
    <property type="molecule type" value="mRNA"/>
</dbReference>
<dbReference type="CCDS" id="CCDS25286.1"/>
<dbReference type="RefSeq" id="NP_034081.1">
    <property type="nucleotide sequence ID" value="NM_009951.4"/>
</dbReference>
<dbReference type="PDB" id="7WW3">
    <property type="method" value="X-ray"/>
    <property type="resolution" value="1.90 A"/>
    <property type="chains" value="A=400-577"/>
</dbReference>
<dbReference type="PDBsum" id="7WW3"/>
<dbReference type="SMR" id="O88477"/>
<dbReference type="BioGRID" id="228260">
    <property type="interactions" value="20"/>
</dbReference>
<dbReference type="ComplexPortal" id="CPX-1089">
    <property type="entry name" value="CRD-mediated mRNA stability complex"/>
</dbReference>
<dbReference type="DIP" id="DIP-48578N"/>
<dbReference type="FunCoup" id="O88477">
    <property type="interactions" value="634"/>
</dbReference>
<dbReference type="IntAct" id="O88477">
    <property type="interactions" value="4"/>
</dbReference>
<dbReference type="STRING" id="10090.ENSMUSP00000013559"/>
<dbReference type="GlyGen" id="O88477">
    <property type="glycosylation" value="1 site, 1 O-linked glycan (1 site)"/>
</dbReference>
<dbReference type="iPTMnet" id="O88477"/>
<dbReference type="PhosphoSitePlus" id="O88477"/>
<dbReference type="SwissPalm" id="O88477"/>
<dbReference type="PaxDb" id="10090-ENSMUSP00000013559"/>
<dbReference type="PeptideAtlas" id="O88477"/>
<dbReference type="ProteomicsDB" id="267196"/>
<dbReference type="Pumba" id="O88477"/>
<dbReference type="Antibodypedia" id="17915">
    <property type="antibodies" value="321 antibodies from 36 providers"/>
</dbReference>
<dbReference type="DNASU" id="140486"/>
<dbReference type="Ensembl" id="ENSMUST00000013559.3">
    <property type="protein sequence ID" value="ENSMUSP00000013559.3"/>
    <property type="gene ID" value="ENSMUSG00000013415.10"/>
</dbReference>
<dbReference type="GeneID" id="140486"/>
<dbReference type="KEGG" id="mmu:140486"/>
<dbReference type="UCSC" id="uc007lay.2">
    <property type="organism name" value="mouse"/>
</dbReference>
<dbReference type="AGR" id="MGI:1890357"/>
<dbReference type="CTD" id="10642"/>
<dbReference type="MGI" id="MGI:1890357">
    <property type="gene designation" value="Igf2bp1"/>
</dbReference>
<dbReference type="VEuPathDB" id="HostDB:ENSMUSG00000013415"/>
<dbReference type="eggNOG" id="KOG2193">
    <property type="taxonomic scope" value="Eukaryota"/>
</dbReference>
<dbReference type="GeneTree" id="ENSGT00940000160427"/>
<dbReference type="HOGENOM" id="CLU_020744_1_0_1"/>
<dbReference type="InParanoid" id="O88477"/>
<dbReference type="OMA" id="AKDTKTX"/>
<dbReference type="OrthoDB" id="752362at2759"/>
<dbReference type="PhylomeDB" id="O88477"/>
<dbReference type="TreeFam" id="TF320229"/>
<dbReference type="BioGRID-ORCS" id="140486">
    <property type="hits" value="2 hits in 78 CRISPR screens"/>
</dbReference>
<dbReference type="ChiTaRS" id="Igf2bp1">
    <property type="organism name" value="mouse"/>
</dbReference>
<dbReference type="PRO" id="PR:O88477"/>
<dbReference type="Proteomes" id="UP000000589">
    <property type="component" value="Chromosome 11"/>
</dbReference>
<dbReference type="RNAct" id="O88477">
    <property type="molecule type" value="protein"/>
</dbReference>
<dbReference type="Bgee" id="ENSMUSG00000013415">
    <property type="expression patterns" value="Expressed in embryonic post-anal tail and 128 other cell types or tissues"/>
</dbReference>
<dbReference type="GO" id="GO:0070937">
    <property type="term" value="C:CRD-mediated mRNA stability complex"/>
    <property type="evidence" value="ECO:0000250"/>
    <property type="project" value="UniProtKB"/>
</dbReference>
<dbReference type="GO" id="GO:0010494">
    <property type="term" value="C:cytoplasmic stress granule"/>
    <property type="evidence" value="ECO:0000250"/>
    <property type="project" value="UniProtKB"/>
</dbReference>
<dbReference type="GO" id="GO:0005829">
    <property type="term" value="C:cytosol"/>
    <property type="evidence" value="ECO:0000266"/>
    <property type="project" value="ComplexPortal"/>
</dbReference>
<dbReference type="GO" id="GO:0043197">
    <property type="term" value="C:dendritic spine"/>
    <property type="evidence" value="ECO:0007669"/>
    <property type="project" value="UniProtKB-SubCell"/>
</dbReference>
<dbReference type="GO" id="GO:0030175">
    <property type="term" value="C:filopodium"/>
    <property type="evidence" value="ECO:0007669"/>
    <property type="project" value="UniProtKB-SubCell"/>
</dbReference>
<dbReference type="GO" id="GO:0030426">
    <property type="term" value="C:growth cone"/>
    <property type="evidence" value="ECO:0007669"/>
    <property type="project" value="UniProtKB-SubCell"/>
</dbReference>
<dbReference type="GO" id="GO:0030027">
    <property type="term" value="C:lamellipodium"/>
    <property type="evidence" value="ECO:0007669"/>
    <property type="project" value="UniProtKB-SubCell"/>
</dbReference>
<dbReference type="GO" id="GO:0043025">
    <property type="term" value="C:neuronal cell body"/>
    <property type="evidence" value="ECO:0007669"/>
    <property type="project" value="Ensembl"/>
</dbReference>
<dbReference type="GO" id="GO:0005654">
    <property type="term" value="C:nucleoplasm"/>
    <property type="evidence" value="ECO:0007669"/>
    <property type="project" value="Ensembl"/>
</dbReference>
<dbReference type="GO" id="GO:0000932">
    <property type="term" value="C:P-body"/>
    <property type="evidence" value="ECO:0000250"/>
    <property type="project" value="UniProtKB"/>
</dbReference>
<dbReference type="GO" id="GO:0048471">
    <property type="term" value="C:perinuclear region of cytoplasm"/>
    <property type="evidence" value="ECO:0007669"/>
    <property type="project" value="UniProtKB-SubCell"/>
</dbReference>
<dbReference type="GO" id="GO:1990904">
    <property type="term" value="C:ribonucleoprotein complex"/>
    <property type="evidence" value="ECO:0000250"/>
    <property type="project" value="UniProtKB"/>
</dbReference>
<dbReference type="GO" id="GO:0003730">
    <property type="term" value="F:mRNA 3'-UTR binding"/>
    <property type="evidence" value="ECO:0000314"/>
    <property type="project" value="UniProtKB"/>
</dbReference>
<dbReference type="GO" id="GO:0048027">
    <property type="term" value="F:mRNA 5'-UTR binding"/>
    <property type="evidence" value="ECO:0007669"/>
    <property type="project" value="Ensembl"/>
</dbReference>
<dbReference type="GO" id="GO:0003729">
    <property type="term" value="F:mRNA binding"/>
    <property type="evidence" value="ECO:0000250"/>
    <property type="project" value="UniProtKB"/>
</dbReference>
<dbReference type="GO" id="GO:1990247">
    <property type="term" value="F:N6-methyladenosine-containing RNA reader activity"/>
    <property type="evidence" value="ECO:0000250"/>
    <property type="project" value="UniProtKB"/>
</dbReference>
<dbReference type="GO" id="GO:0045182">
    <property type="term" value="F:translation regulator activity"/>
    <property type="evidence" value="ECO:0007669"/>
    <property type="project" value="Ensembl"/>
</dbReference>
<dbReference type="GO" id="GO:0070934">
    <property type="term" value="P:CRD-mediated mRNA stabilization"/>
    <property type="evidence" value="ECO:0000250"/>
    <property type="project" value="UniProtKB"/>
</dbReference>
<dbReference type="GO" id="GO:0140059">
    <property type="term" value="P:dendrite arborization"/>
    <property type="evidence" value="ECO:0007669"/>
    <property type="project" value="Ensembl"/>
</dbReference>
<dbReference type="GO" id="GO:0051028">
    <property type="term" value="P:mRNA transport"/>
    <property type="evidence" value="ECO:0007669"/>
    <property type="project" value="UniProtKB-KW"/>
</dbReference>
<dbReference type="GO" id="GO:1900152">
    <property type="term" value="P:negative regulation of nuclear-transcribed mRNA catabolic process, deadenylation-dependent decay"/>
    <property type="evidence" value="ECO:0000266"/>
    <property type="project" value="ComplexPortal"/>
</dbReference>
<dbReference type="GO" id="GO:0017148">
    <property type="term" value="P:negative regulation of translation"/>
    <property type="evidence" value="ECO:0007669"/>
    <property type="project" value="Ensembl"/>
</dbReference>
<dbReference type="GO" id="GO:0097150">
    <property type="term" value="P:neuronal stem cell population maintenance"/>
    <property type="evidence" value="ECO:0000315"/>
    <property type="project" value="MGI"/>
</dbReference>
<dbReference type="GO" id="GO:0022013">
    <property type="term" value="P:pallium cell proliferation in forebrain"/>
    <property type="evidence" value="ECO:0000315"/>
    <property type="project" value="MGI"/>
</dbReference>
<dbReference type="GO" id="GO:2000767">
    <property type="term" value="P:positive regulation of cytoplasmic translation"/>
    <property type="evidence" value="ECO:0000314"/>
    <property type="project" value="UniProtKB"/>
</dbReference>
<dbReference type="GO" id="GO:0010610">
    <property type="term" value="P:regulation of mRNA stability involved in response to stress"/>
    <property type="evidence" value="ECO:0000250"/>
    <property type="project" value="UniProtKB"/>
</dbReference>
<dbReference type="CDD" id="cd22490">
    <property type="entry name" value="KH-I_IGF2BP1_rpt1"/>
    <property type="match status" value="1"/>
</dbReference>
<dbReference type="CDD" id="cd22493">
    <property type="entry name" value="KH-I_IGF2BP1_rpt2"/>
    <property type="match status" value="1"/>
</dbReference>
<dbReference type="CDD" id="cd22496">
    <property type="entry name" value="KH-I_IGF2BP1_rpt3"/>
    <property type="match status" value="1"/>
</dbReference>
<dbReference type="CDD" id="cd22499">
    <property type="entry name" value="KH-I_IGF2BP1_rpt4"/>
    <property type="match status" value="1"/>
</dbReference>
<dbReference type="CDD" id="cd12625">
    <property type="entry name" value="RRM1_IGF2BP1"/>
    <property type="match status" value="1"/>
</dbReference>
<dbReference type="CDD" id="cd12628">
    <property type="entry name" value="RRM2_IGF2BP1"/>
    <property type="match status" value="1"/>
</dbReference>
<dbReference type="FunFam" id="3.30.70.330:FF:000203">
    <property type="entry name" value="insulin-like growth factor 2 mRNA-binding protein 1"/>
    <property type="match status" value="1"/>
</dbReference>
<dbReference type="FunFam" id="3.30.310.210:FF:000001">
    <property type="entry name" value="insulin-like growth factor 2 mRNA-binding protein 1 isoform X1"/>
    <property type="match status" value="1"/>
</dbReference>
<dbReference type="FunFam" id="3.30.1370.10:FF:000026">
    <property type="entry name" value="Insulin-like growth factor 2 mRNA-binding protein 3"/>
    <property type="match status" value="1"/>
</dbReference>
<dbReference type="FunFam" id="3.30.1370.10:FF:000027">
    <property type="entry name" value="insulin-like growth factor 2 mRNA-binding protein 3 isoform X1"/>
    <property type="match status" value="1"/>
</dbReference>
<dbReference type="FunFam" id="3.30.70.330:FF:000099">
    <property type="entry name" value="insulin-like growth factor 2 mRNA-binding protein 3 isoform X1"/>
    <property type="match status" value="1"/>
</dbReference>
<dbReference type="Gene3D" id="3.30.310.210">
    <property type="match status" value="1"/>
</dbReference>
<dbReference type="Gene3D" id="3.30.70.330">
    <property type="match status" value="2"/>
</dbReference>
<dbReference type="Gene3D" id="3.30.1370.10">
    <property type="entry name" value="K Homology domain, type 1"/>
    <property type="match status" value="2"/>
</dbReference>
<dbReference type="InterPro" id="IPR034837">
    <property type="entry name" value="IGF2BP1_RRM1"/>
</dbReference>
<dbReference type="InterPro" id="IPR034842">
    <property type="entry name" value="IGF2BP1_RRM2"/>
</dbReference>
<dbReference type="InterPro" id="IPR004087">
    <property type="entry name" value="KH_dom"/>
</dbReference>
<dbReference type="InterPro" id="IPR004088">
    <property type="entry name" value="KH_dom_type_1"/>
</dbReference>
<dbReference type="InterPro" id="IPR036612">
    <property type="entry name" value="KH_dom_type_1_sf"/>
</dbReference>
<dbReference type="InterPro" id="IPR012677">
    <property type="entry name" value="Nucleotide-bd_a/b_plait_sf"/>
</dbReference>
<dbReference type="InterPro" id="IPR035979">
    <property type="entry name" value="RBD_domain_sf"/>
</dbReference>
<dbReference type="InterPro" id="IPR000504">
    <property type="entry name" value="RRM_dom"/>
</dbReference>
<dbReference type="PANTHER" id="PTHR10288">
    <property type="entry name" value="KH DOMAIN CONTAINING RNA BINDING PROTEIN"/>
    <property type="match status" value="1"/>
</dbReference>
<dbReference type="Pfam" id="PF00013">
    <property type="entry name" value="KH_1"/>
    <property type="match status" value="4"/>
</dbReference>
<dbReference type="Pfam" id="PF00076">
    <property type="entry name" value="RRM_1"/>
    <property type="match status" value="2"/>
</dbReference>
<dbReference type="SMART" id="SM00322">
    <property type="entry name" value="KH"/>
    <property type="match status" value="4"/>
</dbReference>
<dbReference type="SMART" id="SM00360">
    <property type="entry name" value="RRM"/>
    <property type="match status" value="2"/>
</dbReference>
<dbReference type="SUPFAM" id="SSF54791">
    <property type="entry name" value="Eukaryotic type KH-domain (KH-domain type I)"/>
    <property type="match status" value="4"/>
</dbReference>
<dbReference type="SUPFAM" id="SSF54928">
    <property type="entry name" value="RNA-binding domain, RBD"/>
    <property type="match status" value="1"/>
</dbReference>
<dbReference type="PROSITE" id="PS50084">
    <property type="entry name" value="KH_TYPE_1"/>
    <property type="match status" value="4"/>
</dbReference>
<dbReference type="PROSITE" id="PS50102">
    <property type="entry name" value="RRM"/>
    <property type="match status" value="2"/>
</dbReference>
<keyword id="KW-0002">3D-structure</keyword>
<keyword id="KW-0966">Cell projection</keyword>
<keyword id="KW-0963">Cytoplasm</keyword>
<keyword id="KW-0903">Direct protein sequencing</keyword>
<keyword id="KW-0509">mRNA transport</keyword>
<keyword id="KW-0539">Nucleus</keyword>
<keyword id="KW-0597">Phosphoprotein</keyword>
<keyword id="KW-1185">Reference proteome</keyword>
<keyword id="KW-0677">Repeat</keyword>
<keyword id="KW-0694">RNA-binding</keyword>
<keyword id="KW-0770">Synapse</keyword>
<keyword id="KW-0810">Translation regulation</keyword>
<keyword id="KW-0813">Transport</keyword>
<organism>
    <name type="scientific">Mus musculus</name>
    <name type="common">Mouse</name>
    <dbReference type="NCBI Taxonomy" id="10090"/>
    <lineage>
        <taxon>Eukaryota</taxon>
        <taxon>Metazoa</taxon>
        <taxon>Chordata</taxon>
        <taxon>Craniata</taxon>
        <taxon>Vertebrata</taxon>
        <taxon>Euteleostomi</taxon>
        <taxon>Mammalia</taxon>
        <taxon>Eutheria</taxon>
        <taxon>Euarchontoglires</taxon>
        <taxon>Glires</taxon>
        <taxon>Rodentia</taxon>
        <taxon>Myomorpha</taxon>
        <taxon>Muroidea</taxon>
        <taxon>Muridae</taxon>
        <taxon>Murinae</taxon>
        <taxon>Mus</taxon>
        <taxon>Mus</taxon>
    </lineage>
</organism>
<gene>
    <name type="primary">Igf2bp1</name>
    <name type="synonym">Vickz1</name>
</gene>
<evidence type="ECO:0000250" key="1"/>
<evidence type="ECO:0000250" key="2">
    <source>
        <dbReference type="UniProtKB" id="Q9NZI8"/>
    </source>
</evidence>
<evidence type="ECO:0000255" key="3">
    <source>
        <dbReference type="PROSITE-ProRule" id="PRU00117"/>
    </source>
</evidence>
<evidence type="ECO:0000255" key="4">
    <source>
        <dbReference type="PROSITE-ProRule" id="PRU00176"/>
    </source>
</evidence>
<evidence type="ECO:0000256" key="5">
    <source>
        <dbReference type="SAM" id="MobiDB-lite"/>
    </source>
</evidence>
<evidence type="ECO:0000269" key="6">
    <source>
    </source>
</evidence>
<evidence type="ECO:0000269" key="7">
    <source>
    </source>
</evidence>
<evidence type="ECO:0000269" key="8">
    <source>
    </source>
</evidence>
<evidence type="ECO:0000269" key="9">
    <source>
    </source>
</evidence>
<evidence type="ECO:0000269" key="10">
    <source>
    </source>
</evidence>
<evidence type="ECO:0000269" key="11">
    <source>
    </source>
</evidence>
<evidence type="ECO:0000269" key="12">
    <source>
    </source>
</evidence>
<evidence type="ECO:0000269" key="13">
    <source>
    </source>
</evidence>
<evidence type="ECO:0000269" key="14">
    <source>
    </source>
</evidence>
<evidence type="ECO:0000269" key="15">
    <source>
    </source>
</evidence>
<evidence type="ECO:0000269" key="16">
    <source>
    </source>
</evidence>
<evidence type="ECO:0000303" key="17">
    <source>
    </source>
</evidence>
<evidence type="ECO:0000305" key="18"/>
<evidence type="ECO:0007744" key="19">
    <source>
    </source>
</evidence>
<evidence type="ECO:0007744" key="20">
    <source>
    </source>
</evidence>
<evidence type="ECO:0007829" key="21">
    <source>
        <dbReference type="PDB" id="7WW3"/>
    </source>
</evidence>
<accession>O88477</accession>
<accession>Q80US9</accession>
<accession>Q8BRH1</accession>